<reference key="1">
    <citation type="submission" date="2003-01" db="EMBL/GenBank/DDBJ databases">
        <authorList>
            <consortium name="NIH - Zebrafish Gene Collection (ZGC) project"/>
        </authorList>
    </citation>
    <scope>NUCLEOTIDE SEQUENCE [LARGE SCALE MRNA]</scope>
    <source>
        <strain>AB</strain>
    </source>
</reference>
<proteinExistence type="evidence at transcript level"/>
<evidence type="ECO:0000250" key="1"/>
<evidence type="ECO:0000255" key="2"/>
<evidence type="ECO:0000255" key="3">
    <source>
        <dbReference type="PROSITE-ProRule" id="PRU00114"/>
    </source>
</evidence>
<evidence type="ECO:0000255" key="4">
    <source>
        <dbReference type="PROSITE-ProRule" id="PRU00316"/>
    </source>
</evidence>
<evidence type="ECO:0000256" key="5">
    <source>
        <dbReference type="SAM" id="MobiDB-lite"/>
    </source>
</evidence>
<evidence type="ECO:0000305" key="6"/>
<dbReference type="EMBL" id="BC045307">
    <property type="protein sequence ID" value="AAH45307.1"/>
    <property type="molecule type" value="mRNA"/>
</dbReference>
<dbReference type="RefSeq" id="NP_956098.1">
    <property type="nucleotide sequence ID" value="NM_199804.1"/>
</dbReference>
<dbReference type="SMR" id="Q7ZW34"/>
<dbReference type="FunCoup" id="Q7ZW34">
    <property type="interactions" value="645"/>
</dbReference>
<dbReference type="STRING" id="7955.ENSDARP00000089412"/>
<dbReference type="GlyCosmos" id="Q7ZW34">
    <property type="glycosylation" value="9 sites, No reported glycans"/>
</dbReference>
<dbReference type="PaxDb" id="7955-ENSDARP00000089410"/>
<dbReference type="GeneID" id="327429"/>
<dbReference type="KEGG" id="dre:327429"/>
<dbReference type="AGR" id="ZFIN:ZDB-GENE-030131-5640"/>
<dbReference type="CTD" id="53942"/>
<dbReference type="ZFIN" id="ZDB-GENE-030131-5640">
    <property type="gene designation" value="cntn5"/>
</dbReference>
<dbReference type="eggNOG" id="KOG3513">
    <property type="taxonomic scope" value="Eukaryota"/>
</dbReference>
<dbReference type="InParanoid" id="Q7ZW34"/>
<dbReference type="OrthoDB" id="5982258at2759"/>
<dbReference type="PhylomeDB" id="Q7ZW34"/>
<dbReference type="PRO" id="PR:Q7ZW34"/>
<dbReference type="Proteomes" id="UP000000437">
    <property type="component" value="Chromosome 18"/>
</dbReference>
<dbReference type="GO" id="GO:0043005">
    <property type="term" value="C:neuron projection"/>
    <property type="evidence" value="ECO:0000318"/>
    <property type="project" value="GO_Central"/>
</dbReference>
<dbReference type="GO" id="GO:0005886">
    <property type="term" value="C:plasma membrane"/>
    <property type="evidence" value="ECO:0007669"/>
    <property type="project" value="UniProtKB-SubCell"/>
</dbReference>
<dbReference type="GO" id="GO:0098552">
    <property type="term" value="C:side of membrane"/>
    <property type="evidence" value="ECO:0007669"/>
    <property type="project" value="UniProtKB-KW"/>
</dbReference>
<dbReference type="GO" id="GO:0007155">
    <property type="term" value="P:cell adhesion"/>
    <property type="evidence" value="ECO:0007669"/>
    <property type="project" value="UniProtKB-KW"/>
</dbReference>
<dbReference type="CDD" id="cd00063">
    <property type="entry name" value="FN3"/>
    <property type="match status" value="4"/>
</dbReference>
<dbReference type="CDD" id="cd05848">
    <property type="entry name" value="IgI_1_Contactin-5"/>
    <property type="match status" value="1"/>
</dbReference>
<dbReference type="FunFam" id="2.60.40.10:FF:000035">
    <property type="entry name" value="Contactin 1"/>
    <property type="match status" value="1"/>
</dbReference>
<dbReference type="FunFam" id="2.60.40.10:FF:000044">
    <property type="entry name" value="Contactin 1"/>
    <property type="match status" value="1"/>
</dbReference>
<dbReference type="FunFam" id="2.60.40.10:FF:000047">
    <property type="entry name" value="Contactin 1"/>
    <property type="match status" value="1"/>
</dbReference>
<dbReference type="FunFam" id="2.60.40.10:FF:000052">
    <property type="entry name" value="Contactin 1"/>
    <property type="match status" value="1"/>
</dbReference>
<dbReference type="FunFam" id="2.60.40.10:FF:000054">
    <property type="entry name" value="Contactin 1"/>
    <property type="match status" value="1"/>
</dbReference>
<dbReference type="FunFam" id="2.60.40.10:FF:000064">
    <property type="entry name" value="Contactin 1"/>
    <property type="match status" value="1"/>
</dbReference>
<dbReference type="FunFam" id="2.60.40.10:FF:000004">
    <property type="entry name" value="DCC isoform 1"/>
    <property type="match status" value="2"/>
</dbReference>
<dbReference type="FunFam" id="2.60.40.10:FF:000005">
    <property type="entry name" value="Neuronal cell adhesion molecule"/>
    <property type="match status" value="1"/>
</dbReference>
<dbReference type="FunFam" id="2.60.40.10:FF:000028">
    <property type="entry name" value="Neuronal cell adhesion molecule"/>
    <property type="match status" value="1"/>
</dbReference>
<dbReference type="Gene3D" id="2.60.40.10">
    <property type="entry name" value="Immunoglobulins"/>
    <property type="match status" value="10"/>
</dbReference>
<dbReference type="InterPro" id="IPR003961">
    <property type="entry name" value="FN3_dom"/>
</dbReference>
<dbReference type="InterPro" id="IPR036116">
    <property type="entry name" value="FN3_sf"/>
</dbReference>
<dbReference type="InterPro" id="IPR007110">
    <property type="entry name" value="Ig-like_dom"/>
</dbReference>
<dbReference type="InterPro" id="IPR036179">
    <property type="entry name" value="Ig-like_dom_sf"/>
</dbReference>
<dbReference type="InterPro" id="IPR013783">
    <property type="entry name" value="Ig-like_fold"/>
</dbReference>
<dbReference type="InterPro" id="IPR013098">
    <property type="entry name" value="Ig_I-set"/>
</dbReference>
<dbReference type="InterPro" id="IPR003599">
    <property type="entry name" value="Ig_sub"/>
</dbReference>
<dbReference type="InterPro" id="IPR003598">
    <property type="entry name" value="Ig_sub2"/>
</dbReference>
<dbReference type="PANTHER" id="PTHR44170:SF17">
    <property type="entry name" value="CONTACTIN-5"/>
    <property type="match status" value="1"/>
</dbReference>
<dbReference type="PANTHER" id="PTHR44170">
    <property type="entry name" value="PROTEIN SIDEKICK"/>
    <property type="match status" value="1"/>
</dbReference>
<dbReference type="Pfam" id="PF00041">
    <property type="entry name" value="fn3"/>
    <property type="match status" value="3"/>
</dbReference>
<dbReference type="Pfam" id="PF07679">
    <property type="entry name" value="I-set"/>
    <property type="match status" value="3"/>
</dbReference>
<dbReference type="Pfam" id="PF13927">
    <property type="entry name" value="Ig_3"/>
    <property type="match status" value="3"/>
</dbReference>
<dbReference type="SMART" id="SM00060">
    <property type="entry name" value="FN3"/>
    <property type="match status" value="4"/>
</dbReference>
<dbReference type="SMART" id="SM00409">
    <property type="entry name" value="IG"/>
    <property type="match status" value="6"/>
</dbReference>
<dbReference type="SMART" id="SM00408">
    <property type="entry name" value="IGc2"/>
    <property type="match status" value="6"/>
</dbReference>
<dbReference type="SUPFAM" id="SSF49265">
    <property type="entry name" value="Fibronectin type III"/>
    <property type="match status" value="2"/>
</dbReference>
<dbReference type="SUPFAM" id="SSF48726">
    <property type="entry name" value="Immunoglobulin"/>
    <property type="match status" value="6"/>
</dbReference>
<dbReference type="PROSITE" id="PS50853">
    <property type="entry name" value="FN3"/>
    <property type="match status" value="4"/>
</dbReference>
<dbReference type="PROSITE" id="PS50835">
    <property type="entry name" value="IG_LIKE"/>
    <property type="match status" value="6"/>
</dbReference>
<organism>
    <name type="scientific">Danio rerio</name>
    <name type="common">Zebrafish</name>
    <name type="synonym">Brachydanio rerio</name>
    <dbReference type="NCBI Taxonomy" id="7955"/>
    <lineage>
        <taxon>Eukaryota</taxon>
        <taxon>Metazoa</taxon>
        <taxon>Chordata</taxon>
        <taxon>Craniata</taxon>
        <taxon>Vertebrata</taxon>
        <taxon>Euteleostomi</taxon>
        <taxon>Actinopterygii</taxon>
        <taxon>Neopterygii</taxon>
        <taxon>Teleostei</taxon>
        <taxon>Ostariophysi</taxon>
        <taxon>Cypriniformes</taxon>
        <taxon>Danionidae</taxon>
        <taxon>Danioninae</taxon>
        <taxon>Danio</taxon>
    </lineage>
</organism>
<gene>
    <name type="primary">cntn5</name>
    <name type="ORF">zgc:55318</name>
</gene>
<accession>Q7ZW34</accession>
<feature type="signal peptide" evidence="2">
    <location>
        <begin position="1"/>
        <end status="unknown"/>
    </location>
</feature>
<feature type="chain" id="PRO_0000014723" description="Contactin-5">
    <location>
        <begin status="unknown"/>
        <end position="1035"/>
    </location>
</feature>
<feature type="propeptide" id="PRO_0000014724" description="Removed in mature form" evidence="2">
    <location>
        <begin position="1036"/>
        <end position="1056"/>
    </location>
</feature>
<feature type="domain" description="Ig-like C2-type 1">
    <location>
        <begin position="57"/>
        <end position="142"/>
    </location>
</feature>
<feature type="domain" description="Ig-like C2-type 2">
    <location>
        <begin position="154"/>
        <end position="240"/>
    </location>
</feature>
<feature type="domain" description="Ig-like C2-type 3">
    <location>
        <begin position="258"/>
        <end position="343"/>
    </location>
</feature>
<feature type="domain" description="Ig-like C2-type 4">
    <location>
        <begin position="348"/>
        <end position="432"/>
    </location>
</feature>
<feature type="domain" description="Ig-like C2-type 5">
    <location>
        <begin position="438"/>
        <end position="519"/>
    </location>
</feature>
<feature type="domain" description="Ig-like C2-type 6">
    <location>
        <begin position="527"/>
        <end position="622"/>
    </location>
</feature>
<feature type="domain" description="Fibronectin type-III 1" evidence="4">
    <location>
        <begin position="629"/>
        <end position="727"/>
    </location>
</feature>
<feature type="domain" description="Fibronectin type-III 2" evidence="4">
    <location>
        <begin position="732"/>
        <end position="829"/>
    </location>
</feature>
<feature type="domain" description="Fibronectin type-III 3" evidence="4">
    <location>
        <begin position="834"/>
        <end position="928"/>
    </location>
</feature>
<feature type="domain" description="Fibronectin type-III 4" evidence="4">
    <location>
        <begin position="933"/>
        <end position="1023"/>
    </location>
</feature>
<feature type="region of interest" description="Disordered" evidence="5">
    <location>
        <begin position="1"/>
        <end position="33"/>
    </location>
</feature>
<feature type="region of interest" description="Disordered" evidence="5">
    <location>
        <begin position="711"/>
        <end position="736"/>
    </location>
</feature>
<feature type="compositionally biased region" description="Low complexity" evidence="5">
    <location>
        <begin position="1"/>
        <end position="14"/>
    </location>
</feature>
<feature type="compositionally biased region" description="Polar residues" evidence="5">
    <location>
        <begin position="22"/>
        <end position="31"/>
    </location>
</feature>
<feature type="lipid moiety-binding region" description="GPI-anchor amidated asparagine" evidence="2">
    <location>
        <position position="1035"/>
    </location>
</feature>
<feature type="glycosylation site" description="N-linked (GlcNAc...) asparagine" evidence="2">
    <location>
        <position position="96"/>
    </location>
</feature>
<feature type="glycosylation site" description="N-linked (GlcNAc...) asparagine" evidence="2">
    <location>
        <position position="119"/>
    </location>
</feature>
<feature type="glycosylation site" description="N-linked (GlcNAc...) asparagine" evidence="2">
    <location>
        <position position="355"/>
    </location>
</feature>
<feature type="glycosylation site" description="N-linked (GlcNAc...) asparagine" evidence="2">
    <location>
        <position position="489"/>
    </location>
</feature>
<feature type="glycosylation site" description="N-linked (GlcNAc...) asparagine" evidence="2">
    <location>
        <position position="496"/>
    </location>
</feature>
<feature type="glycosylation site" description="N-linked (GlcNAc...) asparagine" evidence="2">
    <location>
        <position position="772"/>
    </location>
</feature>
<feature type="glycosylation site" description="N-linked (GlcNAc...) asparagine" evidence="2">
    <location>
        <position position="887"/>
    </location>
</feature>
<feature type="glycosylation site" description="N-linked (GlcNAc...) asparagine" evidence="2">
    <location>
        <position position="945"/>
    </location>
</feature>
<feature type="glycosylation site" description="N-linked (GlcNAc...) asparagine" evidence="2">
    <location>
        <position position="958"/>
    </location>
</feature>
<feature type="disulfide bond" evidence="3">
    <location>
        <begin position="81"/>
        <end position="131"/>
    </location>
</feature>
<feature type="disulfide bond" evidence="3">
    <location>
        <begin position="175"/>
        <end position="227"/>
    </location>
</feature>
<feature type="disulfide bond" evidence="3">
    <location>
        <begin position="280"/>
        <end position="327"/>
    </location>
</feature>
<feature type="disulfide bond" evidence="3">
    <location>
        <begin position="369"/>
        <end position="416"/>
    </location>
</feature>
<feature type="disulfide bond" evidence="3">
    <location>
        <begin position="459"/>
        <end position="507"/>
    </location>
</feature>
<feature type="disulfide bond" evidence="3">
    <location>
        <begin position="549"/>
        <end position="606"/>
    </location>
</feature>
<protein>
    <recommendedName>
        <fullName>Contactin-5</fullName>
    </recommendedName>
</protein>
<name>CNTN5_DANRE</name>
<keyword id="KW-0130">Cell adhesion</keyword>
<keyword id="KW-1003">Cell membrane</keyword>
<keyword id="KW-1015">Disulfide bond</keyword>
<keyword id="KW-0325">Glycoprotein</keyword>
<keyword id="KW-0336">GPI-anchor</keyword>
<keyword id="KW-0393">Immunoglobulin domain</keyword>
<keyword id="KW-0449">Lipoprotein</keyword>
<keyword id="KW-0472">Membrane</keyword>
<keyword id="KW-1185">Reference proteome</keyword>
<keyword id="KW-0677">Repeat</keyword>
<keyword id="KW-0732">Signal</keyword>
<sequence>MKADSSSSSSMSSRMRLRNSHGVGSSSQDWSPFSRHRYSALSSQEDYRSEESEEFGPVFIQEPDDAIFSLDSDDKKIIMNCEARGNPVPTYSWLINGTNVDTEADFRYSLIDGNLIIHNASEVIDYGRYQCRAENSIGIVLSRDALLQFAYLGPFSGKTRGAVSVREGQGVVLMCAPPSHSPEIIYSWVFNELPSFVAEDSRRFISQETGNLYIPKVQPSDVGSYVCQVKNTVTNARVLSPPTPLTLKTDGVMGEYEPKIEAHFPQTVLAAKGVTVRLECFALGNPVPTITWRKMSGNIPKKARLRKSQAVLEIPNIQLEDSGSYECKAENTRGGTAFRGHLQVYTLPQWISMINDTQLDSGEQLRWECRATGKPRPTYRWLRNGEPLSTQSRVEMVNGELTIHRLQQADSGMYQCIAENKYGAIYSSAELKILASAPMFNNNPVRLIATVGKDVSLECRPRASPKPRISWRKNDRRLQPSRRIMLLRNNTLRIINSSRSDEGSYVCRAENQFGSAELTTVLLVKEPMRVELSPLRVEVTVGESVVLSCKVTHDPSLDVSFLWLLNNQPLNTQQDGGHFEYIQTQSSTADLMIRSILLKHAGKYGCRAQTSTDSVLAEAELLVRGPPGPPGVVIVEEITASTATLSWSHGVDNHSPITTYNVQARSPVSLGWQTVKTDPDPVTGSMESAMAVDLNPWVEYEFRVVATNSIGTGDPSPPSRAVRTKEAVPSVAPANVRGGNGRRHELVISWEPVSEEYQNGEGFGYIVAFRVNGTRGWKEKMVTSADSTTYKYRDETFPPLTPFEVRVGVYNNKGDGPFSEVVTVFSAEGEPREPPSEVQAFAVSSSEIKVLWKPPSPGLGRPQGYEVSFWKDVEQEELGKKKRTLGNETNMLLSGLDGNTQYLVSVKGFNSAGQGPSSTAVKISTKKNAPSLPPGNLMWIQEGNNVSLSWDPVKARDNESEVIGYKVLLRQEGRGHSQVMRTPNSAVVLTLPEGGTYIIEVRAVSEGGEGAASAQVRVLTSSGVRAKNGQLSVQNSPPGLAWTALFLSLMVPSFPL</sequence>
<comment type="function">
    <text evidence="1">Contactins mediate cell surface interactions during nervous system development.</text>
</comment>
<comment type="subcellular location">
    <subcellularLocation>
        <location evidence="1">Cell membrane</location>
        <topology evidence="1">Lipid-anchor</topology>
        <topology evidence="1">GPI-anchor</topology>
    </subcellularLocation>
</comment>
<comment type="similarity">
    <text evidence="6">Belongs to the immunoglobulin superfamily. Contactin family.</text>
</comment>
<comment type="caution">
    <text evidence="6">In contrast to other members of the family, it lacks a canonical signal sequence; the existence of the signal sequence is therefore unsure.</text>
</comment>